<feature type="chain" id="PRO_0000322436" description="Chorismate synthase">
    <location>
        <begin position="1"/>
        <end position="368"/>
    </location>
</feature>
<feature type="binding site" evidence="1">
    <location>
        <position position="46"/>
    </location>
    <ligand>
        <name>NADP(+)</name>
        <dbReference type="ChEBI" id="CHEBI:58349"/>
    </ligand>
</feature>
<feature type="binding site" evidence="1">
    <location>
        <begin position="124"/>
        <end position="126"/>
    </location>
    <ligand>
        <name>FMN</name>
        <dbReference type="ChEBI" id="CHEBI:58210"/>
    </ligand>
</feature>
<feature type="binding site" evidence="1">
    <location>
        <position position="284"/>
    </location>
    <ligand>
        <name>FMN</name>
        <dbReference type="ChEBI" id="CHEBI:58210"/>
    </ligand>
</feature>
<feature type="binding site" evidence="1">
    <location>
        <begin position="299"/>
        <end position="303"/>
    </location>
    <ligand>
        <name>FMN</name>
        <dbReference type="ChEBI" id="CHEBI:58210"/>
    </ligand>
</feature>
<feature type="binding site" evidence="1">
    <location>
        <position position="326"/>
    </location>
    <ligand>
        <name>FMN</name>
        <dbReference type="ChEBI" id="CHEBI:58210"/>
    </ligand>
</feature>
<proteinExistence type="inferred from homology"/>
<sequence>MNTFGRELRITTFGESHGRAIGVVIDGVPAGLPLTEEDIRKELDRRMFCHIHWLNPRCEPEEFEILSGVKDGHTQGTPIAIVIWNKKAISSYYDELWMKPRPGHADLAYYLKYGKFYDHRGGGRASGRTTAAIVAAGAVAKKLLALVGAEVAGHIVELGGVEVKRPYTFEDVKKSWEKPLPVVDDDALAAMLEVLRKNAAEGDSVGGGVEIWAVGVPQGLGEPHFGKIRADLAHAAFSVPAVVALDWGAGRQLAKMRGSEANDPIVVKGGKPGLETNKIGGVLGGITIGEPLYFRVWLKPTPSVRKPQRTVDLAKMEPATLQFKGRYDVSVVPKALVALEAMTAITLADHLLRAGVIRRDRPLKDPVV</sequence>
<gene>
    <name evidence="1" type="primary">aroC</name>
    <name type="ordered locus">Pars_2119</name>
</gene>
<organism>
    <name type="scientific">Pyrobaculum arsenaticum (strain DSM 13514 / JCM 11321 / PZ6)</name>
    <dbReference type="NCBI Taxonomy" id="340102"/>
    <lineage>
        <taxon>Archaea</taxon>
        <taxon>Thermoproteota</taxon>
        <taxon>Thermoprotei</taxon>
        <taxon>Thermoproteales</taxon>
        <taxon>Thermoproteaceae</taxon>
        <taxon>Pyrobaculum</taxon>
    </lineage>
</organism>
<comment type="function">
    <text evidence="1">Catalyzes the anti-1,4-elimination of the C-3 phosphate and the C-6 proR hydrogen from 5-enolpyruvylshikimate-3-phosphate (EPSP) to yield chorismate, which is the branch point compound that serves as the starting substrate for the three terminal pathways of aromatic amino acid biosynthesis. This reaction introduces a second double bond into the aromatic ring system.</text>
</comment>
<comment type="catalytic activity">
    <reaction evidence="1">
        <text>5-O-(1-carboxyvinyl)-3-phosphoshikimate = chorismate + phosphate</text>
        <dbReference type="Rhea" id="RHEA:21020"/>
        <dbReference type="ChEBI" id="CHEBI:29748"/>
        <dbReference type="ChEBI" id="CHEBI:43474"/>
        <dbReference type="ChEBI" id="CHEBI:57701"/>
        <dbReference type="EC" id="4.2.3.5"/>
    </reaction>
</comment>
<comment type="cofactor">
    <cofactor evidence="1">
        <name>FMNH2</name>
        <dbReference type="ChEBI" id="CHEBI:57618"/>
    </cofactor>
    <text evidence="1">Reduced FMN (FMNH(2)).</text>
</comment>
<comment type="pathway">
    <text evidence="1">Metabolic intermediate biosynthesis; chorismate biosynthesis; chorismate from D-erythrose 4-phosphate and phosphoenolpyruvate: step 7/7.</text>
</comment>
<comment type="similarity">
    <text evidence="1">Belongs to the chorismate synthase family.</text>
</comment>
<name>AROC_PYRAR</name>
<keyword id="KW-0028">Amino-acid biosynthesis</keyword>
<keyword id="KW-0057">Aromatic amino acid biosynthesis</keyword>
<keyword id="KW-0274">FAD</keyword>
<keyword id="KW-0285">Flavoprotein</keyword>
<keyword id="KW-0288">FMN</keyword>
<keyword id="KW-0456">Lyase</keyword>
<keyword id="KW-0521">NADP</keyword>
<dbReference type="EC" id="4.2.3.5" evidence="1"/>
<dbReference type="EMBL" id="CP000660">
    <property type="protein sequence ID" value="ABP51665.1"/>
    <property type="molecule type" value="Genomic_DNA"/>
</dbReference>
<dbReference type="SMR" id="A4WMP8"/>
<dbReference type="STRING" id="340102.Pars_2119"/>
<dbReference type="KEGG" id="pas:Pars_2119"/>
<dbReference type="HOGENOM" id="CLU_034547_0_0_2"/>
<dbReference type="OrthoDB" id="33049at2157"/>
<dbReference type="PhylomeDB" id="A4WMP8"/>
<dbReference type="UniPathway" id="UPA00053">
    <property type="reaction ID" value="UER00090"/>
</dbReference>
<dbReference type="Proteomes" id="UP000001567">
    <property type="component" value="Chromosome"/>
</dbReference>
<dbReference type="GO" id="GO:0005829">
    <property type="term" value="C:cytosol"/>
    <property type="evidence" value="ECO:0007669"/>
    <property type="project" value="TreeGrafter"/>
</dbReference>
<dbReference type="GO" id="GO:0004107">
    <property type="term" value="F:chorismate synthase activity"/>
    <property type="evidence" value="ECO:0007669"/>
    <property type="project" value="UniProtKB-UniRule"/>
</dbReference>
<dbReference type="GO" id="GO:0010181">
    <property type="term" value="F:FMN binding"/>
    <property type="evidence" value="ECO:0007669"/>
    <property type="project" value="TreeGrafter"/>
</dbReference>
<dbReference type="GO" id="GO:0008652">
    <property type="term" value="P:amino acid biosynthetic process"/>
    <property type="evidence" value="ECO:0007669"/>
    <property type="project" value="UniProtKB-KW"/>
</dbReference>
<dbReference type="GO" id="GO:0009073">
    <property type="term" value="P:aromatic amino acid family biosynthetic process"/>
    <property type="evidence" value="ECO:0007669"/>
    <property type="project" value="UniProtKB-KW"/>
</dbReference>
<dbReference type="GO" id="GO:0009423">
    <property type="term" value="P:chorismate biosynthetic process"/>
    <property type="evidence" value="ECO:0007669"/>
    <property type="project" value="UniProtKB-UniRule"/>
</dbReference>
<dbReference type="CDD" id="cd07304">
    <property type="entry name" value="Chorismate_synthase"/>
    <property type="match status" value="1"/>
</dbReference>
<dbReference type="Gene3D" id="3.60.150.10">
    <property type="entry name" value="Chorismate synthase AroC"/>
    <property type="match status" value="1"/>
</dbReference>
<dbReference type="HAMAP" id="MF_00300">
    <property type="entry name" value="Chorismate_synth"/>
    <property type="match status" value="1"/>
</dbReference>
<dbReference type="InterPro" id="IPR000453">
    <property type="entry name" value="Chorismate_synth"/>
</dbReference>
<dbReference type="InterPro" id="IPR035904">
    <property type="entry name" value="Chorismate_synth_AroC_sf"/>
</dbReference>
<dbReference type="InterPro" id="IPR020541">
    <property type="entry name" value="Chorismate_synthase_CS"/>
</dbReference>
<dbReference type="NCBIfam" id="TIGR00033">
    <property type="entry name" value="aroC"/>
    <property type="match status" value="1"/>
</dbReference>
<dbReference type="NCBIfam" id="NF003793">
    <property type="entry name" value="PRK05382.1"/>
    <property type="match status" value="1"/>
</dbReference>
<dbReference type="PANTHER" id="PTHR21085">
    <property type="entry name" value="CHORISMATE SYNTHASE"/>
    <property type="match status" value="1"/>
</dbReference>
<dbReference type="PANTHER" id="PTHR21085:SF0">
    <property type="entry name" value="CHORISMATE SYNTHASE"/>
    <property type="match status" value="1"/>
</dbReference>
<dbReference type="Pfam" id="PF01264">
    <property type="entry name" value="Chorismate_synt"/>
    <property type="match status" value="1"/>
</dbReference>
<dbReference type="PIRSF" id="PIRSF001456">
    <property type="entry name" value="Chorismate_synth"/>
    <property type="match status" value="1"/>
</dbReference>
<dbReference type="SUPFAM" id="SSF103263">
    <property type="entry name" value="Chorismate synthase, AroC"/>
    <property type="match status" value="1"/>
</dbReference>
<dbReference type="PROSITE" id="PS00787">
    <property type="entry name" value="CHORISMATE_SYNTHASE_1"/>
    <property type="match status" value="1"/>
</dbReference>
<dbReference type="PROSITE" id="PS00788">
    <property type="entry name" value="CHORISMATE_SYNTHASE_2"/>
    <property type="match status" value="1"/>
</dbReference>
<reference key="1">
    <citation type="submission" date="2007-04" db="EMBL/GenBank/DDBJ databases">
        <title>Complete sequence of Pyrobaculum arsenaticum DSM 13514.</title>
        <authorList>
            <consortium name="US DOE Joint Genome Institute"/>
            <person name="Copeland A."/>
            <person name="Lucas S."/>
            <person name="Lapidus A."/>
            <person name="Barry K."/>
            <person name="Glavina del Rio T."/>
            <person name="Dalin E."/>
            <person name="Tice H."/>
            <person name="Pitluck S."/>
            <person name="Chain P."/>
            <person name="Malfatti S."/>
            <person name="Shin M."/>
            <person name="Vergez L."/>
            <person name="Schmutz J."/>
            <person name="Larimer F."/>
            <person name="Land M."/>
            <person name="Hauser L."/>
            <person name="Kyrpides N."/>
            <person name="Mikhailova N."/>
            <person name="Cozen A.E."/>
            <person name="Fitz-Gibbon S.T."/>
            <person name="House C.H."/>
            <person name="Saltikov C."/>
            <person name="Lowe T.M."/>
            <person name="Richardson P."/>
        </authorList>
    </citation>
    <scope>NUCLEOTIDE SEQUENCE [LARGE SCALE GENOMIC DNA]</scope>
    <source>
        <strain>ATCC 700994 / DSM 13514 / JCM 11321 / PZ6</strain>
    </source>
</reference>
<evidence type="ECO:0000255" key="1">
    <source>
        <dbReference type="HAMAP-Rule" id="MF_00300"/>
    </source>
</evidence>
<protein>
    <recommendedName>
        <fullName evidence="1">Chorismate synthase</fullName>
        <shortName evidence="1">CS</shortName>
        <ecNumber evidence="1">4.2.3.5</ecNumber>
    </recommendedName>
    <alternativeName>
        <fullName evidence="1">5-enolpyruvylshikimate-3-phosphate phospholyase</fullName>
    </alternativeName>
</protein>
<accession>A4WMP8</accession>